<proteinExistence type="inferred from homology"/>
<protein>
    <recommendedName>
        <fullName evidence="1">UPF0232 protein JTY_0004</fullName>
    </recommendedName>
</protein>
<sequence>MTGSVDRPDQNRGERSMKSPGLDLVRRTLDEARAAARARGQDAGRGRVASVASGRVAGRRRSWSGPGPDIRDPQPLGKAARELAKKRGWSVRVAEGMVLGQWSAVVGHQIAEHARPTALNDGVLSVIAESTAWATQLRIMQAQLLAKIAAAVGNDVVRSLKITGPAAPSWRKGPRHIAGRGPRDTYG</sequence>
<name>Y004_MYCBT</name>
<dbReference type="EMBL" id="AP010918">
    <property type="protein sequence ID" value="BAH24306.1"/>
    <property type="molecule type" value="Genomic_DNA"/>
</dbReference>
<dbReference type="RefSeq" id="WP_003899769.1">
    <property type="nucleotide sequence ID" value="NZ_CP014566.1"/>
</dbReference>
<dbReference type="SMR" id="C1AJ01"/>
<dbReference type="KEGG" id="mbt:JTY_0004"/>
<dbReference type="HOGENOM" id="CLU_087206_0_1_11"/>
<dbReference type="HAMAP" id="MF_00630">
    <property type="entry name" value="UPF0232"/>
    <property type="match status" value="1"/>
</dbReference>
<dbReference type="InterPro" id="IPR007922">
    <property type="entry name" value="DciA-like"/>
</dbReference>
<dbReference type="InterPro" id="IPR023007">
    <property type="entry name" value="UPF0232_actinobac"/>
</dbReference>
<dbReference type="NCBIfam" id="NF002871">
    <property type="entry name" value="PRK03195.1"/>
    <property type="match status" value="1"/>
</dbReference>
<dbReference type="PANTHER" id="PTHR36456">
    <property type="entry name" value="UPF0232 PROTEIN SCO3875"/>
    <property type="match status" value="1"/>
</dbReference>
<dbReference type="PANTHER" id="PTHR36456:SF1">
    <property type="entry name" value="UPF0232 PROTEIN SCO3875"/>
    <property type="match status" value="1"/>
</dbReference>
<dbReference type="Pfam" id="PF05258">
    <property type="entry name" value="DciA"/>
    <property type="match status" value="1"/>
</dbReference>
<comment type="similarity">
    <text evidence="1">Belongs to the UPF0232 family.</text>
</comment>
<organism>
    <name type="scientific">Mycobacterium bovis (strain BCG / Tokyo 172 / ATCC 35737 / TMC 1019)</name>
    <dbReference type="NCBI Taxonomy" id="561275"/>
    <lineage>
        <taxon>Bacteria</taxon>
        <taxon>Bacillati</taxon>
        <taxon>Actinomycetota</taxon>
        <taxon>Actinomycetes</taxon>
        <taxon>Mycobacteriales</taxon>
        <taxon>Mycobacteriaceae</taxon>
        <taxon>Mycobacterium</taxon>
        <taxon>Mycobacterium tuberculosis complex</taxon>
    </lineage>
</organism>
<accession>C1AJ01</accession>
<reference key="1">
    <citation type="journal article" date="2009" name="Vaccine">
        <title>Whole genome sequence analysis of Mycobacterium bovis bacillus Calmette-Guerin (BCG) Tokyo 172: a comparative study of BCG vaccine substrains.</title>
        <authorList>
            <person name="Seki M."/>
            <person name="Honda I."/>
            <person name="Fujita I."/>
            <person name="Yano I."/>
            <person name="Yamamoto S."/>
            <person name="Koyama A."/>
        </authorList>
    </citation>
    <scope>NUCLEOTIDE SEQUENCE [LARGE SCALE GENOMIC DNA]</scope>
    <source>
        <strain>BCG / Tokyo 172 / ATCC 35737 / TMC 1019</strain>
    </source>
</reference>
<gene>
    <name type="ordered locus">JTY_0004</name>
</gene>
<feature type="chain" id="PRO_1000147271" description="UPF0232 protein JTY_0004">
    <location>
        <begin position="1"/>
        <end position="187"/>
    </location>
</feature>
<feature type="region of interest" description="Disordered" evidence="2">
    <location>
        <begin position="1"/>
        <end position="75"/>
    </location>
</feature>
<feature type="region of interest" description="Disordered" evidence="2">
    <location>
        <begin position="168"/>
        <end position="187"/>
    </location>
</feature>
<feature type="compositionally biased region" description="Basic and acidic residues" evidence="2">
    <location>
        <begin position="1"/>
        <end position="17"/>
    </location>
</feature>
<feature type="compositionally biased region" description="Basic and acidic residues" evidence="2">
    <location>
        <begin position="24"/>
        <end position="45"/>
    </location>
</feature>
<evidence type="ECO:0000255" key="1">
    <source>
        <dbReference type="HAMAP-Rule" id="MF_00630"/>
    </source>
</evidence>
<evidence type="ECO:0000256" key="2">
    <source>
        <dbReference type="SAM" id="MobiDB-lite"/>
    </source>
</evidence>